<feature type="chain" id="PRO_0000276817" description="Large ribosomal subunit protein bL36c">
    <location>
        <begin position="1"/>
        <end position="37"/>
    </location>
</feature>
<organism>
    <name type="scientific">Gossypium barbadense</name>
    <name type="common">Sea Island cotton</name>
    <name type="synonym">Hibiscus barbadensis</name>
    <dbReference type="NCBI Taxonomy" id="3634"/>
    <lineage>
        <taxon>Eukaryota</taxon>
        <taxon>Viridiplantae</taxon>
        <taxon>Streptophyta</taxon>
        <taxon>Embryophyta</taxon>
        <taxon>Tracheophyta</taxon>
        <taxon>Spermatophyta</taxon>
        <taxon>Magnoliopsida</taxon>
        <taxon>eudicotyledons</taxon>
        <taxon>Gunneridae</taxon>
        <taxon>Pentapetalae</taxon>
        <taxon>rosids</taxon>
        <taxon>malvids</taxon>
        <taxon>Malvales</taxon>
        <taxon>Malvaceae</taxon>
        <taxon>Malvoideae</taxon>
        <taxon>Gossypium</taxon>
    </lineage>
</organism>
<gene>
    <name evidence="1" type="primary">rpl36</name>
</gene>
<comment type="subcellular location">
    <subcellularLocation>
        <location>Plastid</location>
        <location>Chloroplast</location>
    </subcellularLocation>
</comment>
<comment type="similarity">
    <text evidence="1">Belongs to the bacterial ribosomal protein bL36 family.</text>
</comment>
<keyword id="KW-0150">Chloroplast</keyword>
<keyword id="KW-0934">Plastid</keyword>
<keyword id="KW-0687">Ribonucleoprotein</keyword>
<keyword id="KW-0689">Ribosomal protein</keyword>
<proteinExistence type="inferred from homology"/>
<dbReference type="EMBL" id="AP009123">
    <property type="protein sequence ID" value="BAF41281.1"/>
    <property type="molecule type" value="Genomic_DNA"/>
</dbReference>
<dbReference type="RefSeq" id="YP_913221.1">
    <property type="nucleotide sequence ID" value="NC_008641.1"/>
</dbReference>
<dbReference type="SMR" id="A0ZZ69"/>
<dbReference type="GeneID" id="4575243"/>
<dbReference type="OrthoDB" id="10265903at2759"/>
<dbReference type="GO" id="GO:0009507">
    <property type="term" value="C:chloroplast"/>
    <property type="evidence" value="ECO:0007669"/>
    <property type="project" value="UniProtKB-SubCell"/>
</dbReference>
<dbReference type="GO" id="GO:1990904">
    <property type="term" value="C:ribonucleoprotein complex"/>
    <property type="evidence" value="ECO:0007669"/>
    <property type="project" value="UniProtKB-KW"/>
</dbReference>
<dbReference type="GO" id="GO:0005840">
    <property type="term" value="C:ribosome"/>
    <property type="evidence" value="ECO:0007669"/>
    <property type="project" value="UniProtKB-KW"/>
</dbReference>
<dbReference type="GO" id="GO:0003735">
    <property type="term" value="F:structural constituent of ribosome"/>
    <property type="evidence" value="ECO:0007669"/>
    <property type="project" value="InterPro"/>
</dbReference>
<dbReference type="GO" id="GO:0006412">
    <property type="term" value="P:translation"/>
    <property type="evidence" value="ECO:0007669"/>
    <property type="project" value="UniProtKB-UniRule"/>
</dbReference>
<dbReference type="HAMAP" id="MF_00251">
    <property type="entry name" value="Ribosomal_bL36"/>
    <property type="match status" value="1"/>
</dbReference>
<dbReference type="InterPro" id="IPR000473">
    <property type="entry name" value="Ribosomal_bL36"/>
</dbReference>
<dbReference type="InterPro" id="IPR035977">
    <property type="entry name" value="Ribosomal_bL36_sp"/>
</dbReference>
<dbReference type="NCBIfam" id="TIGR01022">
    <property type="entry name" value="rpmJ_bact"/>
    <property type="match status" value="1"/>
</dbReference>
<dbReference type="PANTHER" id="PTHR42888">
    <property type="entry name" value="50S RIBOSOMAL PROTEIN L36, CHLOROPLASTIC"/>
    <property type="match status" value="1"/>
</dbReference>
<dbReference type="PANTHER" id="PTHR42888:SF1">
    <property type="entry name" value="LARGE RIBOSOMAL SUBUNIT PROTEIN BL36C"/>
    <property type="match status" value="1"/>
</dbReference>
<dbReference type="Pfam" id="PF00444">
    <property type="entry name" value="Ribosomal_L36"/>
    <property type="match status" value="1"/>
</dbReference>
<dbReference type="SUPFAM" id="SSF57840">
    <property type="entry name" value="Ribosomal protein L36"/>
    <property type="match status" value="1"/>
</dbReference>
<dbReference type="PROSITE" id="PS00828">
    <property type="entry name" value="RIBOSOMAL_L36"/>
    <property type="match status" value="1"/>
</dbReference>
<evidence type="ECO:0000255" key="1">
    <source>
        <dbReference type="HAMAP-Rule" id="MF_00251"/>
    </source>
</evidence>
<evidence type="ECO:0000305" key="2"/>
<protein>
    <recommendedName>
        <fullName evidence="1">Large ribosomal subunit protein bL36c</fullName>
    </recommendedName>
    <alternativeName>
        <fullName evidence="2">50S ribosomal protein L36, chloroplastic</fullName>
    </alternativeName>
</protein>
<sequence>MKIRASVRKICEKCRLIRRRGRIIVICFNPRHKQRQG</sequence>
<geneLocation type="chloroplast"/>
<reference key="1">
    <citation type="journal article" date="2006" name="Genes Genet. Syst.">
        <title>Complete nucleotide sequence of the cotton (Gossypium barbadense L.) chloroplast genome with a comparative analysis of sequences among 9 dicot plants.</title>
        <authorList>
            <person name="Ibrahim R.I.H."/>
            <person name="Azuma J."/>
            <person name="Sakamoto M."/>
        </authorList>
    </citation>
    <scope>NUCLEOTIDE SEQUENCE [LARGE SCALE GENOMIC DNA]</scope>
</reference>
<name>RK36_GOSBA</name>
<accession>A0ZZ69</accession>